<accession>Q8CWS4</accession>
<comment type="function">
    <text evidence="1">Specifically methylates guanosine-37 in various tRNAs.</text>
</comment>
<comment type="catalytic activity">
    <reaction evidence="1">
        <text>guanosine(37) in tRNA + S-adenosyl-L-methionine = N(1)-methylguanosine(37) in tRNA + S-adenosyl-L-homocysteine + H(+)</text>
        <dbReference type="Rhea" id="RHEA:36899"/>
        <dbReference type="Rhea" id="RHEA-COMP:10145"/>
        <dbReference type="Rhea" id="RHEA-COMP:10147"/>
        <dbReference type="ChEBI" id="CHEBI:15378"/>
        <dbReference type="ChEBI" id="CHEBI:57856"/>
        <dbReference type="ChEBI" id="CHEBI:59789"/>
        <dbReference type="ChEBI" id="CHEBI:73542"/>
        <dbReference type="ChEBI" id="CHEBI:74269"/>
        <dbReference type="EC" id="2.1.1.228"/>
    </reaction>
</comment>
<comment type="subunit">
    <text evidence="1">Homodimer.</text>
</comment>
<comment type="subcellular location">
    <subcellularLocation>
        <location evidence="1">Cytoplasm</location>
    </subcellularLocation>
</comment>
<comment type="similarity">
    <text evidence="1">Belongs to the RNA methyltransferase TrmD family.</text>
</comment>
<reference key="1">
    <citation type="journal article" date="2001" name="J. Bacteriol.">
        <title>Genome of the bacterium Streptococcus pneumoniae strain R6.</title>
        <authorList>
            <person name="Hoskins J."/>
            <person name="Alborn W.E. Jr."/>
            <person name="Arnold J."/>
            <person name="Blaszczak L.C."/>
            <person name="Burgett S."/>
            <person name="DeHoff B.S."/>
            <person name="Estrem S.T."/>
            <person name="Fritz L."/>
            <person name="Fu D.-J."/>
            <person name="Fuller W."/>
            <person name="Geringer C."/>
            <person name="Gilmour R."/>
            <person name="Glass J.S."/>
            <person name="Khoja H."/>
            <person name="Kraft A.R."/>
            <person name="Lagace R.E."/>
            <person name="LeBlanc D.J."/>
            <person name="Lee L.N."/>
            <person name="Lefkowitz E.J."/>
            <person name="Lu J."/>
            <person name="Matsushima P."/>
            <person name="McAhren S.M."/>
            <person name="McHenney M."/>
            <person name="McLeaster K."/>
            <person name="Mundy C.W."/>
            <person name="Nicas T.I."/>
            <person name="Norris F.H."/>
            <person name="O'Gara M."/>
            <person name="Peery R.B."/>
            <person name="Robertson G.T."/>
            <person name="Rockey P."/>
            <person name="Sun P.-M."/>
            <person name="Winkler M.E."/>
            <person name="Yang Y."/>
            <person name="Young-Bellido M."/>
            <person name="Zhao G."/>
            <person name="Zook C.A."/>
            <person name="Baltz R.H."/>
            <person name="Jaskunas S.R."/>
            <person name="Rosteck P.R. Jr."/>
            <person name="Skatrud P.L."/>
            <person name="Glass J.I."/>
        </authorList>
    </citation>
    <scope>NUCLEOTIDE SEQUENCE [LARGE SCALE GENOMIC DNA]</scope>
    <source>
        <strain>ATCC BAA-255 / R6</strain>
    </source>
</reference>
<proteinExistence type="inferred from homology"/>
<keyword id="KW-0963">Cytoplasm</keyword>
<keyword id="KW-0489">Methyltransferase</keyword>
<keyword id="KW-1185">Reference proteome</keyword>
<keyword id="KW-0949">S-adenosyl-L-methionine</keyword>
<keyword id="KW-0808">Transferase</keyword>
<keyword id="KW-0819">tRNA processing</keyword>
<dbReference type="EC" id="2.1.1.228" evidence="1"/>
<dbReference type="EMBL" id="AE007317">
    <property type="protein sequence ID" value="AAK99491.1"/>
    <property type="molecule type" value="Genomic_DNA"/>
</dbReference>
<dbReference type="PIR" id="G97957">
    <property type="entry name" value="G97957"/>
</dbReference>
<dbReference type="RefSeq" id="NP_358281.1">
    <property type="nucleotide sequence ID" value="NC_003098.1"/>
</dbReference>
<dbReference type="RefSeq" id="WP_000686926.1">
    <property type="nucleotide sequence ID" value="NC_003098.1"/>
</dbReference>
<dbReference type="SMR" id="Q8CWS4"/>
<dbReference type="STRING" id="171101.spr0687"/>
<dbReference type="KEGG" id="spr:spr0687"/>
<dbReference type="PATRIC" id="fig|171101.6.peg.760"/>
<dbReference type="eggNOG" id="COG0336">
    <property type="taxonomic scope" value="Bacteria"/>
</dbReference>
<dbReference type="HOGENOM" id="CLU_047363_0_1_9"/>
<dbReference type="Proteomes" id="UP000000586">
    <property type="component" value="Chromosome"/>
</dbReference>
<dbReference type="GO" id="GO:0005829">
    <property type="term" value="C:cytosol"/>
    <property type="evidence" value="ECO:0000318"/>
    <property type="project" value="GO_Central"/>
</dbReference>
<dbReference type="GO" id="GO:0052906">
    <property type="term" value="F:tRNA (guanine(37)-N1)-methyltransferase activity"/>
    <property type="evidence" value="ECO:0000318"/>
    <property type="project" value="GO_Central"/>
</dbReference>
<dbReference type="GO" id="GO:0002939">
    <property type="term" value="P:tRNA N1-guanine methylation"/>
    <property type="evidence" value="ECO:0000318"/>
    <property type="project" value="GO_Central"/>
</dbReference>
<dbReference type="CDD" id="cd18080">
    <property type="entry name" value="TrmD-like"/>
    <property type="match status" value="1"/>
</dbReference>
<dbReference type="FunFam" id="1.10.1270.20:FF:000001">
    <property type="entry name" value="tRNA (guanine-N(1)-)-methyltransferase"/>
    <property type="match status" value="1"/>
</dbReference>
<dbReference type="FunFam" id="3.40.1280.10:FF:000001">
    <property type="entry name" value="tRNA (guanine-N(1)-)-methyltransferase"/>
    <property type="match status" value="1"/>
</dbReference>
<dbReference type="Gene3D" id="3.40.1280.10">
    <property type="match status" value="1"/>
</dbReference>
<dbReference type="Gene3D" id="1.10.1270.20">
    <property type="entry name" value="tRNA(m1g37)methyltransferase, domain 2"/>
    <property type="match status" value="1"/>
</dbReference>
<dbReference type="HAMAP" id="MF_00605">
    <property type="entry name" value="TrmD"/>
    <property type="match status" value="1"/>
</dbReference>
<dbReference type="InterPro" id="IPR029028">
    <property type="entry name" value="Alpha/beta_knot_MTases"/>
</dbReference>
<dbReference type="InterPro" id="IPR023148">
    <property type="entry name" value="tRNA_m1G_MeTrfase_C_sf"/>
</dbReference>
<dbReference type="InterPro" id="IPR002649">
    <property type="entry name" value="tRNA_m1G_MeTrfase_TrmD"/>
</dbReference>
<dbReference type="InterPro" id="IPR029026">
    <property type="entry name" value="tRNA_m1G_MTases_N"/>
</dbReference>
<dbReference type="InterPro" id="IPR016009">
    <property type="entry name" value="tRNA_MeTrfase_TRMD/TRM10"/>
</dbReference>
<dbReference type="NCBIfam" id="NF000648">
    <property type="entry name" value="PRK00026.1"/>
    <property type="match status" value="1"/>
</dbReference>
<dbReference type="NCBIfam" id="TIGR00088">
    <property type="entry name" value="trmD"/>
    <property type="match status" value="1"/>
</dbReference>
<dbReference type="PANTHER" id="PTHR46417">
    <property type="entry name" value="TRNA (GUANINE-N(1)-)-METHYLTRANSFERASE"/>
    <property type="match status" value="1"/>
</dbReference>
<dbReference type="PANTHER" id="PTHR46417:SF1">
    <property type="entry name" value="TRNA (GUANINE-N(1)-)-METHYLTRANSFERASE"/>
    <property type="match status" value="1"/>
</dbReference>
<dbReference type="Pfam" id="PF01746">
    <property type="entry name" value="tRNA_m1G_MT"/>
    <property type="match status" value="1"/>
</dbReference>
<dbReference type="PIRSF" id="PIRSF000386">
    <property type="entry name" value="tRNA_mtase"/>
    <property type="match status" value="1"/>
</dbReference>
<dbReference type="SUPFAM" id="SSF75217">
    <property type="entry name" value="alpha/beta knot"/>
    <property type="match status" value="1"/>
</dbReference>
<protein>
    <recommendedName>
        <fullName evidence="1">tRNA (guanine-N(1)-)-methyltransferase</fullName>
        <ecNumber evidence="1">2.1.1.228</ecNumber>
    </recommendedName>
    <alternativeName>
        <fullName evidence="1">M1G-methyltransferase</fullName>
    </alternativeName>
    <alternativeName>
        <fullName evidence="1">tRNA [GM37] methyltransferase</fullName>
    </alternativeName>
</protein>
<sequence length="239" mass="27661">MKIDILTLFPEMFSPLEHSIVGKAREKGLLDIQYHNFRENAEKARHVDDEPYGGGQGMLLRVQPIFDSFDAIEKKNPRVILLDPAGKQFDQAYAEDLAQEEELIFICGHYEGYDERIKTLVTDEISLGDYVLTGGELAAMTMIDATVRLIPEVIGKESSHQDDSFSSGLLEYPQYTRPYDYRGMVVPDVLMSGHHEKIRQWRLYESLKKTYERRPDLLEHYQLTVEEEKMLAEIKENKE</sequence>
<evidence type="ECO:0000255" key="1">
    <source>
        <dbReference type="HAMAP-Rule" id="MF_00605"/>
    </source>
</evidence>
<gene>
    <name evidence="1" type="primary">trmD</name>
    <name type="ordered locus">spr0687</name>
</gene>
<organism>
    <name type="scientific">Streptococcus pneumoniae (strain ATCC BAA-255 / R6)</name>
    <dbReference type="NCBI Taxonomy" id="171101"/>
    <lineage>
        <taxon>Bacteria</taxon>
        <taxon>Bacillati</taxon>
        <taxon>Bacillota</taxon>
        <taxon>Bacilli</taxon>
        <taxon>Lactobacillales</taxon>
        <taxon>Streptococcaceae</taxon>
        <taxon>Streptococcus</taxon>
    </lineage>
</organism>
<feature type="chain" id="PRO_0000060469" description="tRNA (guanine-N(1)-)-methyltransferase">
    <location>
        <begin position="1"/>
        <end position="239"/>
    </location>
</feature>
<feature type="binding site" evidence="1">
    <location>
        <position position="108"/>
    </location>
    <ligand>
        <name>S-adenosyl-L-methionine</name>
        <dbReference type="ChEBI" id="CHEBI:59789"/>
    </ligand>
</feature>
<feature type="binding site" evidence="1">
    <location>
        <begin position="127"/>
        <end position="132"/>
    </location>
    <ligand>
        <name>S-adenosyl-L-methionine</name>
        <dbReference type="ChEBI" id="CHEBI:59789"/>
    </ligand>
</feature>
<name>TRMD_STRR6</name>